<gene>
    <name type="ordered locus">YPO1857</name>
    <name type="ordered locus">y2449</name>
    <name type="ordered locus">YP_1536</name>
</gene>
<dbReference type="EC" id="1.6.5.2" evidence="1"/>
<dbReference type="EMBL" id="AL590842">
    <property type="protein sequence ID" value="CAL20497.1"/>
    <property type="molecule type" value="Genomic_DNA"/>
</dbReference>
<dbReference type="EMBL" id="AE009952">
    <property type="protein sequence ID" value="AAM86006.1"/>
    <property type="status" value="ALT_INIT"/>
    <property type="molecule type" value="Genomic_DNA"/>
</dbReference>
<dbReference type="EMBL" id="AE017042">
    <property type="protein sequence ID" value="AAS61771.1"/>
    <property type="status" value="ALT_INIT"/>
    <property type="molecule type" value="Genomic_DNA"/>
</dbReference>
<dbReference type="PIR" id="AF0226">
    <property type="entry name" value="AF0226"/>
</dbReference>
<dbReference type="RefSeq" id="YP_002346851.1">
    <property type="nucleotide sequence ID" value="NC_003143.1"/>
</dbReference>
<dbReference type="SMR" id="Q8ZF61"/>
<dbReference type="STRING" id="214092.YPO1857"/>
<dbReference type="PaxDb" id="214092-YPO1857"/>
<dbReference type="DNASU" id="1147396"/>
<dbReference type="EnsemblBacteria" id="AAS61771">
    <property type="protein sequence ID" value="AAS61771"/>
    <property type="gene ID" value="YP_1536"/>
</dbReference>
<dbReference type="KEGG" id="ype:YPO1857"/>
<dbReference type="KEGG" id="ypk:y2449"/>
<dbReference type="KEGG" id="ypm:YP_1536"/>
<dbReference type="PATRIC" id="fig|214092.21.peg.2222"/>
<dbReference type="eggNOG" id="COG0655">
    <property type="taxonomic scope" value="Bacteria"/>
</dbReference>
<dbReference type="HOGENOM" id="CLU_051402_0_2_6"/>
<dbReference type="OMA" id="KFADGNP"/>
<dbReference type="OrthoDB" id="9801479at2"/>
<dbReference type="Proteomes" id="UP000000815">
    <property type="component" value="Chromosome"/>
</dbReference>
<dbReference type="Proteomes" id="UP000001019">
    <property type="component" value="Chromosome"/>
</dbReference>
<dbReference type="Proteomes" id="UP000002490">
    <property type="component" value="Chromosome"/>
</dbReference>
<dbReference type="GO" id="GO:0016020">
    <property type="term" value="C:membrane"/>
    <property type="evidence" value="ECO:0000318"/>
    <property type="project" value="GO_Central"/>
</dbReference>
<dbReference type="GO" id="GO:0050660">
    <property type="term" value="F:flavin adenine dinucleotide binding"/>
    <property type="evidence" value="ECO:0007669"/>
    <property type="project" value="UniProtKB-UniRule"/>
</dbReference>
<dbReference type="GO" id="GO:0010181">
    <property type="term" value="F:FMN binding"/>
    <property type="evidence" value="ECO:0007669"/>
    <property type="project" value="InterPro"/>
</dbReference>
<dbReference type="GO" id="GO:0051287">
    <property type="term" value="F:NAD binding"/>
    <property type="evidence" value="ECO:0007669"/>
    <property type="project" value="UniProtKB-UniRule"/>
</dbReference>
<dbReference type="GO" id="GO:0003955">
    <property type="term" value="F:NAD(P)H dehydrogenase (quinone) activity"/>
    <property type="evidence" value="ECO:0000318"/>
    <property type="project" value="GO_Central"/>
</dbReference>
<dbReference type="GO" id="GO:0050136">
    <property type="term" value="F:NADH:ubiquinone reductase (non-electrogenic) activity"/>
    <property type="evidence" value="ECO:0007669"/>
    <property type="project" value="RHEA"/>
</dbReference>
<dbReference type="GO" id="GO:0050661">
    <property type="term" value="F:NADP binding"/>
    <property type="evidence" value="ECO:0007669"/>
    <property type="project" value="UniProtKB-UniRule"/>
</dbReference>
<dbReference type="GO" id="GO:0008753">
    <property type="term" value="F:NADPH dehydrogenase (quinone) activity"/>
    <property type="evidence" value="ECO:0007669"/>
    <property type="project" value="RHEA"/>
</dbReference>
<dbReference type="FunFam" id="3.40.50.360:FF:000004">
    <property type="entry name" value="NAD(P)H dehydrogenase (quinone)"/>
    <property type="match status" value="1"/>
</dbReference>
<dbReference type="Gene3D" id="3.40.50.360">
    <property type="match status" value="1"/>
</dbReference>
<dbReference type="HAMAP" id="MF_01017">
    <property type="entry name" value="NQOR"/>
    <property type="match status" value="1"/>
</dbReference>
<dbReference type="InterPro" id="IPR008254">
    <property type="entry name" value="Flavodoxin/NO_synth"/>
</dbReference>
<dbReference type="InterPro" id="IPR029039">
    <property type="entry name" value="Flavoprotein-like_sf"/>
</dbReference>
<dbReference type="InterPro" id="IPR010089">
    <property type="entry name" value="Flavoprotein_WrbA-like"/>
</dbReference>
<dbReference type="InterPro" id="IPR005025">
    <property type="entry name" value="FMN_Rdtase-like_dom"/>
</dbReference>
<dbReference type="InterPro" id="IPR037513">
    <property type="entry name" value="NQO"/>
</dbReference>
<dbReference type="NCBIfam" id="TIGR01755">
    <property type="entry name" value="flav_wrbA"/>
    <property type="match status" value="1"/>
</dbReference>
<dbReference type="NCBIfam" id="NF002999">
    <property type="entry name" value="PRK03767.1"/>
    <property type="match status" value="1"/>
</dbReference>
<dbReference type="PANTHER" id="PTHR30546">
    <property type="entry name" value="FLAVODOXIN-RELATED PROTEIN WRBA-RELATED"/>
    <property type="match status" value="1"/>
</dbReference>
<dbReference type="PANTHER" id="PTHR30546:SF23">
    <property type="entry name" value="FLAVOPROTEIN-LIKE PROTEIN YCP4-RELATED"/>
    <property type="match status" value="1"/>
</dbReference>
<dbReference type="Pfam" id="PF03358">
    <property type="entry name" value="FMN_red"/>
    <property type="match status" value="1"/>
</dbReference>
<dbReference type="SUPFAM" id="SSF52218">
    <property type="entry name" value="Flavoproteins"/>
    <property type="match status" value="1"/>
</dbReference>
<dbReference type="PROSITE" id="PS50902">
    <property type="entry name" value="FLAVODOXIN_LIKE"/>
    <property type="match status" value="1"/>
</dbReference>
<proteinExistence type="inferred from homology"/>
<comment type="catalytic activity">
    <reaction evidence="1">
        <text>a quinone + NADH + H(+) = a quinol + NAD(+)</text>
        <dbReference type="Rhea" id="RHEA:46160"/>
        <dbReference type="ChEBI" id="CHEBI:15378"/>
        <dbReference type="ChEBI" id="CHEBI:24646"/>
        <dbReference type="ChEBI" id="CHEBI:57540"/>
        <dbReference type="ChEBI" id="CHEBI:57945"/>
        <dbReference type="ChEBI" id="CHEBI:132124"/>
        <dbReference type="EC" id="1.6.5.2"/>
    </reaction>
</comment>
<comment type="catalytic activity">
    <reaction evidence="1">
        <text>a quinone + NADPH + H(+) = a quinol + NADP(+)</text>
        <dbReference type="Rhea" id="RHEA:46164"/>
        <dbReference type="ChEBI" id="CHEBI:15378"/>
        <dbReference type="ChEBI" id="CHEBI:24646"/>
        <dbReference type="ChEBI" id="CHEBI:57783"/>
        <dbReference type="ChEBI" id="CHEBI:58349"/>
        <dbReference type="ChEBI" id="CHEBI:132124"/>
        <dbReference type="EC" id="1.6.5.2"/>
    </reaction>
</comment>
<comment type="cofactor">
    <cofactor evidence="1">
        <name>FMN</name>
        <dbReference type="ChEBI" id="CHEBI:58210"/>
    </cofactor>
    <text evidence="1">Binds 1 FMN per monomer.</text>
</comment>
<comment type="similarity">
    <text evidence="1">Belongs to the WrbA family.</text>
</comment>
<comment type="sequence caution" evidence="2">
    <conflict type="erroneous initiation">
        <sequence resource="EMBL-CDS" id="AAM86006"/>
    </conflict>
</comment>
<comment type="sequence caution" evidence="2">
    <conflict type="erroneous initiation">
        <sequence resource="EMBL-CDS" id="AAS61771"/>
    </conflict>
</comment>
<feature type="chain" id="PRO_0000200759" description="NAD(P)H dehydrogenase (quinone)">
    <location>
        <begin position="1"/>
        <end position="199"/>
    </location>
</feature>
<feature type="domain" description="Flavodoxin-like" evidence="1">
    <location>
        <begin position="4"/>
        <end position="190"/>
    </location>
</feature>
<feature type="binding site" evidence="1">
    <location>
        <begin position="10"/>
        <end position="15"/>
    </location>
    <ligand>
        <name>FMN</name>
        <dbReference type="ChEBI" id="CHEBI:58210"/>
    </ligand>
</feature>
<feature type="binding site" evidence="1">
    <location>
        <position position="12"/>
    </location>
    <ligand>
        <name>NAD(+)</name>
        <dbReference type="ChEBI" id="CHEBI:57540"/>
    </ligand>
</feature>
<feature type="binding site" evidence="1">
    <location>
        <begin position="79"/>
        <end position="81"/>
    </location>
    <ligand>
        <name>FMN</name>
        <dbReference type="ChEBI" id="CHEBI:58210"/>
    </ligand>
</feature>
<feature type="binding site" evidence="1">
    <location>
        <position position="99"/>
    </location>
    <ligand>
        <name>substrate</name>
    </ligand>
</feature>
<feature type="binding site" evidence="1">
    <location>
        <begin position="114"/>
        <end position="119"/>
    </location>
    <ligand>
        <name>FMN</name>
        <dbReference type="ChEBI" id="CHEBI:58210"/>
    </ligand>
</feature>
<feature type="binding site" evidence="1">
    <location>
        <position position="134"/>
    </location>
    <ligand>
        <name>FMN</name>
        <dbReference type="ChEBI" id="CHEBI:58210"/>
    </ligand>
</feature>
<accession>Q8ZF61</accession>
<accession>Q0WFT7</accession>
<protein>
    <recommendedName>
        <fullName evidence="1">NAD(P)H dehydrogenase (quinone)</fullName>
        <ecNumber evidence="1">1.6.5.2</ecNumber>
    </recommendedName>
    <alternativeName>
        <fullName>Flavoprotein WrbA</fullName>
    </alternativeName>
    <alternativeName>
        <fullName evidence="1">NAD(P)H:quinone oxidoreductase</fullName>
        <shortName evidence="1">NQO</shortName>
    </alternativeName>
</protein>
<organism>
    <name type="scientific">Yersinia pestis</name>
    <dbReference type="NCBI Taxonomy" id="632"/>
    <lineage>
        <taxon>Bacteria</taxon>
        <taxon>Pseudomonadati</taxon>
        <taxon>Pseudomonadota</taxon>
        <taxon>Gammaproteobacteria</taxon>
        <taxon>Enterobacterales</taxon>
        <taxon>Yersiniaceae</taxon>
        <taxon>Yersinia</taxon>
    </lineage>
</organism>
<keyword id="KW-0285">Flavoprotein</keyword>
<keyword id="KW-0288">FMN</keyword>
<keyword id="KW-0520">NAD</keyword>
<keyword id="KW-0521">NADP</keyword>
<keyword id="KW-0547">Nucleotide-binding</keyword>
<keyword id="KW-0560">Oxidoreductase</keyword>
<keyword id="KW-1185">Reference proteome</keyword>
<reference key="1">
    <citation type="journal article" date="2001" name="Nature">
        <title>Genome sequence of Yersinia pestis, the causative agent of plague.</title>
        <authorList>
            <person name="Parkhill J."/>
            <person name="Wren B.W."/>
            <person name="Thomson N.R."/>
            <person name="Titball R.W."/>
            <person name="Holden M.T.G."/>
            <person name="Prentice M.B."/>
            <person name="Sebaihia M."/>
            <person name="James K.D."/>
            <person name="Churcher C.M."/>
            <person name="Mungall K.L."/>
            <person name="Baker S."/>
            <person name="Basham D."/>
            <person name="Bentley S.D."/>
            <person name="Brooks K."/>
            <person name="Cerdeno-Tarraga A.-M."/>
            <person name="Chillingworth T."/>
            <person name="Cronin A."/>
            <person name="Davies R.M."/>
            <person name="Davis P."/>
            <person name="Dougan G."/>
            <person name="Feltwell T."/>
            <person name="Hamlin N."/>
            <person name="Holroyd S."/>
            <person name="Jagels K."/>
            <person name="Karlyshev A.V."/>
            <person name="Leather S."/>
            <person name="Moule S."/>
            <person name="Oyston P.C.F."/>
            <person name="Quail M.A."/>
            <person name="Rutherford K.M."/>
            <person name="Simmonds M."/>
            <person name="Skelton J."/>
            <person name="Stevens K."/>
            <person name="Whitehead S."/>
            <person name="Barrell B.G."/>
        </authorList>
    </citation>
    <scope>NUCLEOTIDE SEQUENCE [LARGE SCALE GENOMIC DNA]</scope>
    <source>
        <strain>CO-92 / Biovar Orientalis</strain>
    </source>
</reference>
<reference key="2">
    <citation type="journal article" date="2002" name="J. Bacteriol.">
        <title>Genome sequence of Yersinia pestis KIM.</title>
        <authorList>
            <person name="Deng W."/>
            <person name="Burland V."/>
            <person name="Plunkett G. III"/>
            <person name="Boutin A."/>
            <person name="Mayhew G.F."/>
            <person name="Liss P."/>
            <person name="Perna N.T."/>
            <person name="Rose D.J."/>
            <person name="Mau B."/>
            <person name="Zhou S."/>
            <person name="Schwartz D.C."/>
            <person name="Fetherston J.D."/>
            <person name="Lindler L.E."/>
            <person name="Brubaker R.R."/>
            <person name="Plano G.V."/>
            <person name="Straley S.C."/>
            <person name="McDonough K.A."/>
            <person name="Nilles M.L."/>
            <person name="Matson J.S."/>
            <person name="Blattner F.R."/>
            <person name="Perry R.D."/>
        </authorList>
    </citation>
    <scope>NUCLEOTIDE SEQUENCE [LARGE SCALE GENOMIC DNA]</scope>
    <source>
        <strain>KIM10+ / Biovar Mediaevalis</strain>
    </source>
</reference>
<reference key="3">
    <citation type="journal article" date="2004" name="DNA Res.">
        <title>Complete genome sequence of Yersinia pestis strain 91001, an isolate avirulent to humans.</title>
        <authorList>
            <person name="Song Y."/>
            <person name="Tong Z."/>
            <person name="Wang J."/>
            <person name="Wang L."/>
            <person name="Guo Z."/>
            <person name="Han Y."/>
            <person name="Zhang J."/>
            <person name="Pei D."/>
            <person name="Zhou D."/>
            <person name="Qin H."/>
            <person name="Pang X."/>
            <person name="Han Y."/>
            <person name="Zhai J."/>
            <person name="Li M."/>
            <person name="Cui B."/>
            <person name="Qi Z."/>
            <person name="Jin L."/>
            <person name="Dai R."/>
            <person name="Chen F."/>
            <person name="Li S."/>
            <person name="Ye C."/>
            <person name="Du Z."/>
            <person name="Lin W."/>
            <person name="Wang J."/>
            <person name="Yu J."/>
            <person name="Yang H."/>
            <person name="Wang J."/>
            <person name="Huang P."/>
            <person name="Yang R."/>
        </authorList>
    </citation>
    <scope>NUCLEOTIDE SEQUENCE [LARGE SCALE GENOMIC DNA]</scope>
    <source>
        <strain>91001 / Biovar Mediaevalis</strain>
    </source>
</reference>
<name>NQOR_YERPE</name>
<evidence type="ECO:0000255" key="1">
    <source>
        <dbReference type="HAMAP-Rule" id="MF_01017"/>
    </source>
</evidence>
<evidence type="ECO:0000305" key="2"/>
<sequence>MAKILVLYYSMYGHIETLAGAIAEGARKVSGVDVTIKRVPETMPAEAFAKAGGKTNQQAPVATPHELADYDGIIFGTPTRFGNMSGQMRTFLDQTGGLWASGALYGKVASVFASTGTGGGQEHTITSTWTTLAHHGFIIVPIGYGAKELFDVSQTRGGTPYGATTIAGGDGSRQPSAEELAIARFQGEHVAKITAKLKG</sequence>